<accession>B7H296</accession>
<reference key="1">
    <citation type="journal article" date="2008" name="J. Bacteriol.">
        <title>Comparative genome sequence analysis of multidrug-resistant Acinetobacter baumannii.</title>
        <authorList>
            <person name="Adams M.D."/>
            <person name="Goglin K."/>
            <person name="Molyneaux N."/>
            <person name="Hujer K.M."/>
            <person name="Lavender H."/>
            <person name="Jamison J.J."/>
            <person name="MacDonald I.J."/>
            <person name="Martin K.M."/>
            <person name="Russo T."/>
            <person name="Campagnari A.A."/>
            <person name="Hujer A.M."/>
            <person name="Bonomo R.A."/>
            <person name="Gill S.R."/>
        </authorList>
    </citation>
    <scope>NUCLEOTIDE SEQUENCE [LARGE SCALE GENOMIC DNA]</scope>
    <source>
        <strain>AB307-0294</strain>
    </source>
</reference>
<sequence>MQQLNPSEISALIKQRIGDLDTSATAKNEGTIVMVSDGIVRIHGLADAMYGEMIEFDGGLFGMALNLEQDSVGAVVLGNYLSLQEGQKARCTGRVLEVPVGPELLGRVVDALGNPIDGKGPIDAKLTDAVEKVAPGVIWRQSVDQPVQTGYKSVDTMIPVGRGQRELIIGDRQTGKTAMAIDAIIAQKNSGIKCVYVAIGQKQSTIANVVRKLEETGAMAYTTVVAAAAADPAAMQYLAPYSGCTMGEYFRDRGEDALIIYDDLSKQAVAYRQISLLLRRPPGREAYPGDVFYLHSRLLERASRVSAEYVEKFTNGAVTGKTGSLTALPIIETQAGDVSAFVPTNVISITDGQIFLETSLFNAGIRPAVNAGISVSRVGGSAQTKIIKKLSGGIRTALAQYRELAAFAQFASDLDEATRKQLEHGQRVTELMKQKQYAPYSIADQAVSVYASNEGYMADVEVKKIVDFDAALIAYFRSEYAPLMKQIDETGDYNKDIEAAIKAGIESFKATQTY</sequence>
<feature type="chain" id="PRO_1000143329" description="ATP synthase subunit alpha">
    <location>
        <begin position="1"/>
        <end position="514"/>
    </location>
</feature>
<feature type="binding site" evidence="1">
    <location>
        <begin position="170"/>
        <end position="177"/>
    </location>
    <ligand>
        <name>ATP</name>
        <dbReference type="ChEBI" id="CHEBI:30616"/>
    </ligand>
</feature>
<feature type="site" description="Required for activity" evidence="1">
    <location>
        <position position="374"/>
    </location>
</feature>
<proteinExistence type="inferred from homology"/>
<gene>
    <name evidence="1" type="primary">atpA</name>
    <name type="ordered locus">ABBFA_003367</name>
</gene>
<keyword id="KW-0066">ATP synthesis</keyword>
<keyword id="KW-0067">ATP-binding</keyword>
<keyword id="KW-0997">Cell inner membrane</keyword>
<keyword id="KW-1003">Cell membrane</keyword>
<keyword id="KW-0139">CF(1)</keyword>
<keyword id="KW-0375">Hydrogen ion transport</keyword>
<keyword id="KW-0406">Ion transport</keyword>
<keyword id="KW-0472">Membrane</keyword>
<keyword id="KW-0547">Nucleotide-binding</keyword>
<keyword id="KW-1278">Translocase</keyword>
<keyword id="KW-0813">Transport</keyword>
<comment type="function">
    <text evidence="1">Produces ATP from ADP in the presence of a proton gradient across the membrane. The alpha chain is a regulatory subunit.</text>
</comment>
<comment type="catalytic activity">
    <reaction evidence="1">
        <text>ATP + H2O + 4 H(+)(in) = ADP + phosphate + 5 H(+)(out)</text>
        <dbReference type="Rhea" id="RHEA:57720"/>
        <dbReference type="ChEBI" id="CHEBI:15377"/>
        <dbReference type="ChEBI" id="CHEBI:15378"/>
        <dbReference type="ChEBI" id="CHEBI:30616"/>
        <dbReference type="ChEBI" id="CHEBI:43474"/>
        <dbReference type="ChEBI" id="CHEBI:456216"/>
        <dbReference type="EC" id="7.1.2.2"/>
    </reaction>
</comment>
<comment type="subunit">
    <text evidence="1">F-type ATPases have 2 components, CF(1) - the catalytic core - and CF(0) - the membrane proton channel. CF(1) has five subunits: alpha(3), beta(3), gamma(1), delta(1), epsilon(1). CF(0) has three main subunits: a(1), b(2) and c(9-12). The alpha and beta chains form an alternating ring which encloses part of the gamma chain. CF(1) is attached to CF(0) by a central stalk formed by the gamma and epsilon chains, while a peripheral stalk is formed by the delta and b chains.</text>
</comment>
<comment type="subcellular location">
    <subcellularLocation>
        <location evidence="1">Cell inner membrane</location>
        <topology evidence="1">Peripheral membrane protein</topology>
    </subcellularLocation>
</comment>
<comment type="similarity">
    <text evidence="1">Belongs to the ATPase alpha/beta chains family.</text>
</comment>
<protein>
    <recommendedName>
        <fullName evidence="1">ATP synthase subunit alpha</fullName>
        <ecNumber evidence="1">7.1.2.2</ecNumber>
    </recommendedName>
    <alternativeName>
        <fullName evidence="1">ATP synthase F1 sector subunit alpha</fullName>
    </alternativeName>
    <alternativeName>
        <fullName evidence="1">F-ATPase subunit alpha</fullName>
    </alternativeName>
</protein>
<evidence type="ECO:0000255" key="1">
    <source>
        <dbReference type="HAMAP-Rule" id="MF_01346"/>
    </source>
</evidence>
<name>ATPA_ACIB3</name>
<organism>
    <name type="scientific">Acinetobacter baumannii (strain AB307-0294)</name>
    <dbReference type="NCBI Taxonomy" id="557600"/>
    <lineage>
        <taxon>Bacteria</taxon>
        <taxon>Pseudomonadati</taxon>
        <taxon>Pseudomonadota</taxon>
        <taxon>Gammaproteobacteria</taxon>
        <taxon>Moraxellales</taxon>
        <taxon>Moraxellaceae</taxon>
        <taxon>Acinetobacter</taxon>
        <taxon>Acinetobacter calcoaceticus/baumannii complex</taxon>
    </lineage>
</organism>
<dbReference type="EC" id="7.1.2.2" evidence="1"/>
<dbReference type="EMBL" id="CP001172">
    <property type="protein sequence ID" value="ACJ58155.1"/>
    <property type="molecule type" value="Genomic_DNA"/>
</dbReference>
<dbReference type="RefSeq" id="WP_001186635.1">
    <property type="nucleotide sequence ID" value="NZ_CP001172.1"/>
</dbReference>
<dbReference type="SMR" id="B7H296"/>
<dbReference type="GeneID" id="92892165"/>
<dbReference type="HOGENOM" id="CLU_010091_2_1_6"/>
<dbReference type="Proteomes" id="UP000006924">
    <property type="component" value="Chromosome"/>
</dbReference>
<dbReference type="GO" id="GO:0005886">
    <property type="term" value="C:plasma membrane"/>
    <property type="evidence" value="ECO:0007669"/>
    <property type="project" value="UniProtKB-SubCell"/>
</dbReference>
<dbReference type="GO" id="GO:0045259">
    <property type="term" value="C:proton-transporting ATP synthase complex"/>
    <property type="evidence" value="ECO:0007669"/>
    <property type="project" value="UniProtKB-KW"/>
</dbReference>
<dbReference type="GO" id="GO:0043531">
    <property type="term" value="F:ADP binding"/>
    <property type="evidence" value="ECO:0007669"/>
    <property type="project" value="TreeGrafter"/>
</dbReference>
<dbReference type="GO" id="GO:0005524">
    <property type="term" value="F:ATP binding"/>
    <property type="evidence" value="ECO:0007669"/>
    <property type="project" value="UniProtKB-UniRule"/>
</dbReference>
<dbReference type="GO" id="GO:0046933">
    <property type="term" value="F:proton-transporting ATP synthase activity, rotational mechanism"/>
    <property type="evidence" value="ECO:0007669"/>
    <property type="project" value="UniProtKB-UniRule"/>
</dbReference>
<dbReference type="CDD" id="cd18113">
    <property type="entry name" value="ATP-synt_F1_alpha_C"/>
    <property type="match status" value="1"/>
</dbReference>
<dbReference type="CDD" id="cd18116">
    <property type="entry name" value="ATP-synt_F1_alpha_N"/>
    <property type="match status" value="1"/>
</dbReference>
<dbReference type="CDD" id="cd01132">
    <property type="entry name" value="F1-ATPase_alpha_CD"/>
    <property type="match status" value="1"/>
</dbReference>
<dbReference type="FunFam" id="1.20.150.20:FF:000001">
    <property type="entry name" value="ATP synthase subunit alpha"/>
    <property type="match status" value="1"/>
</dbReference>
<dbReference type="FunFam" id="2.40.30.20:FF:000001">
    <property type="entry name" value="ATP synthase subunit alpha"/>
    <property type="match status" value="1"/>
</dbReference>
<dbReference type="FunFam" id="3.40.50.300:FF:000002">
    <property type="entry name" value="ATP synthase subunit alpha"/>
    <property type="match status" value="1"/>
</dbReference>
<dbReference type="Gene3D" id="2.40.30.20">
    <property type="match status" value="1"/>
</dbReference>
<dbReference type="Gene3D" id="1.20.150.20">
    <property type="entry name" value="ATP synthase alpha/beta chain, C-terminal domain"/>
    <property type="match status" value="1"/>
</dbReference>
<dbReference type="Gene3D" id="3.40.50.300">
    <property type="entry name" value="P-loop containing nucleotide triphosphate hydrolases"/>
    <property type="match status" value="1"/>
</dbReference>
<dbReference type="HAMAP" id="MF_01346">
    <property type="entry name" value="ATP_synth_alpha_bact"/>
    <property type="match status" value="1"/>
</dbReference>
<dbReference type="InterPro" id="IPR023366">
    <property type="entry name" value="ATP_synth_asu-like_sf"/>
</dbReference>
<dbReference type="InterPro" id="IPR000793">
    <property type="entry name" value="ATP_synth_asu_C"/>
</dbReference>
<dbReference type="InterPro" id="IPR038376">
    <property type="entry name" value="ATP_synth_asu_C_sf"/>
</dbReference>
<dbReference type="InterPro" id="IPR033732">
    <property type="entry name" value="ATP_synth_F1_a_nt-bd_dom"/>
</dbReference>
<dbReference type="InterPro" id="IPR005294">
    <property type="entry name" value="ATP_synth_F1_asu"/>
</dbReference>
<dbReference type="InterPro" id="IPR020003">
    <property type="entry name" value="ATPase_a/bsu_AS"/>
</dbReference>
<dbReference type="InterPro" id="IPR004100">
    <property type="entry name" value="ATPase_F1/V1/A1_a/bsu_N"/>
</dbReference>
<dbReference type="InterPro" id="IPR036121">
    <property type="entry name" value="ATPase_F1/V1/A1_a/bsu_N_sf"/>
</dbReference>
<dbReference type="InterPro" id="IPR000194">
    <property type="entry name" value="ATPase_F1/V1/A1_a/bsu_nucl-bd"/>
</dbReference>
<dbReference type="InterPro" id="IPR027417">
    <property type="entry name" value="P-loop_NTPase"/>
</dbReference>
<dbReference type="NCBIfam" id="TIGR00962">
    <property type="entry name" value="atpA"/>
    <property type="match status" value="1"/>
</dbReference>
<dbReference type="NCBIfam" id="NF009884">
    <property type="entry name" value="PRK13343.1"/>
    <property type="match status" value="1"/>
</dbReference>
<dbReference type="PANTHER" id="PTHR48082">
    <property type="entry name" value="ATP SYNTHASE SUBUNIT ALPHA, MITOCHONDRIAL"/>
    <property type="match status" value="1"/>
</dbReference>
<dbReference type="PANTHER" id="PTHR48082:SF2">
    <property type="entry name" value="ATP SYNTHASE SUBUNIT ALPHA, MITOCHONDRIAL"/>
    <property type="match status" value="1"/>
</dbReference>
<dbReference type="Pfam" id="PF00006">
    <property type="entry name" value="ATP-synt_ab"/>
    <property type="match status" value="1"/>
</dbReference>
<dbReference type="Pfam" id="PF00306">
    <property type="entry name" value="ATP-synt_ab_C"/>
    <property type="match status" value="1"/>
</dbReference>
<dbReference type="Pfam" id="PF02874">
    <property type="entry name" value="ATP-synt_ab_N"/>
    <property type="match status" value="1"/>
</dbReference>
<dbReference type="SUPFAM" id="SSF47917">
    <property type="entry name" value="C-terminal domain of alpha and beta subunits of F1 ATP synthase"/>
    <property type="match status" value="1"/>
</dbReference>
<dbReference type="SUPFAM" id="SSF50615">
    <property type="entry name" value="N-terminal domain of alpha and beta subunits of F1 ATP synthase"/>
    <property type="match status" value="1"/>
</dbReference>
<dbReference type="SUPFAM" id="SSF52540">
    <property type="entry name" value="P-loop containing nucleoside triphosphate hydrolases"/>
    <property type="match status" value="1"/>
</dbReference>
<dbReference type="PROSITE" id="PS00152">
    <property type="entry name" value="ATPASE_ALPHA_BETA"/>
    <property type="match status" value="1"/>
</dbReference>